<proteinExistence type="inferred from homology"/>
<sequence>MEREQDTPWTQSTEHTNIQKEENGQQTQKLERPNSTQSMDHYLKIMNQVDMHKQTAFWKQWLSLKNPTQESLKTRVLKRWKLFNKQGWTS</sequence>
<comment type="function">
    <text evidence="1">Plays an important role in promoting lung pathology in both primary viral infection and secondary bacterial infection. Promotes alteration of mitochondrial morphology, dissipation of mitochondrial membrane potential, and cell death. Alternatively, inhibits the production of interferon in the infected cell at the level of host mitochondrial antiviral signaling MAVS. Its level of expression differs greatly depending on which cell type is infected, in a manner that is independent of the levels of expression of other viral proteins. Monocytic cells are more affected than epithelial cells. Seems to disable virus-infected monocytes or other host innate immune cells. During early stage of infection, predisposes the mitochondria to permeability transition through interaction with host SLC25A6/ANT3 and VDAC1. These proteins participate in the formation of the permeability transition pore complex (PTPC) responsible of the release of mitochondrial products that triggers apoptosis.</text>
</comment>
<comment type="subunit">
    <text evidence="1">Oligomer. Interacts with human SLC25A6/ANT3 and VDAC1. Interacts with host MAVS.</text>
</comment>
<comment type="subcellular location">
    <subcellularLocation>
        <location evidence="1">Host mitochondrion inner membrane</location>
    </subcellularLocation>
    <subcellularLocation>
        <location evidence="1">Host nucleus</location>
    </subcellularLocation>
    <subcellularLocation>
        <location evidence="1">Host cytoplasm</location>
        <location evidence="1">Host cytosol</location>
    </subcellularLocation>
    <text evidence="1">Inner mitochondrial membrane in most cells types. Otherwise is detected in the nucleus and cytosol.</text>
</comment>
<comment type="miscellaneous">
    <text>Is not encoded in all strains, and seems to be dispensable for replication.</text>
</comment>
<comment type="similarity">
    <text evidence="1">Belongs to the influenza viruses PB1-F2 family.</text>
</comment>
<feature type="chain" id="PRO_0000278704" description="Protein PB1-F2">
    <location>
        <begin position="1"/>
        <end position="90"/>
    </location>
</feature>
<feature type="region of interest" description="Disordered" evidence="2">
    <location>
        <begin position="1"/>
        <end position="39"/>
    </location>
</feature>
<feature type="region of interest" description="Mitochondrial targeting sequence" evidence="1">
    <location>
        <begin position="65"/>
        <end position="87"/>
    </location>
</feature>
<feature type="compositionally biased region" description="Polar residues" evidence="2">
    <location>
        <begin position="7"/>
        <end position="16"/>
    </location>
</feature>
<feature type="compositionally biased region" description="Polar residues" evidence="2">
    <location>
        <begin position="24"/>
        <end position="39"/>
    </location>
</feature>
<feature type="site" description="Low pathogenicity" evidence="1">
    <location>
        <position position="66"/>
    </location>
</feature>
<protein>
    <recommendedName>
        <fullName evidence="1">Protein PB1-F2</fullName>
    </recommendedName>
</protein>
<organism>
    <name type="scientific">Influenza A virus (strain A/Chicken/Pennsylvania/1370/1983 H5N2)</name>
    <dbReference type="NCBI Taxonomy" id="385617"/>
    <lineage>
        <taxon>Viruses</taxon>
        <taxon>Riboviria</taxon>
        <taxon>Orthornavirae</taxon>
        <taxon>Negarnaviricota</taxon>
        <taxon>Polyploviricotina</taxon>
        <taxon>Insthoviricetes</taxon>
        <taxon>Articulavirales</taxon>
        <taxon>Orthomyxoviridae</taxon>
        <taxon>Alphainfluenzavirus</taxon>
        <taxon>Alphainfluenzavirus influenzae</taxon>
        <taxon>Influenza A virus</taxon>
    </lineage>
</organism>
<keyword id="KW-0053">Apoptosis</keyword>
<keyword id="KW-1035">Host cytoplasm</keyword>
<keyword id="KW-1043">Host membrane</keyword>
<keyword id="KW-1045">Host mitochondrion</keyword>
<keyword id="KW-1046">Host mitochondrion inner membrane</keyword>
<keyword id="KW-1048">Host nucleus</keyword>
<keyword id="KW-0945">Host-virus interaction</keyword>
<keyword id="KW-1090">Inhibition of host innate immune response by virus</keyword>
<keyword id="KW-1097">Inhibition of host MAVS by virus</keyword>
<keyword id="KW-1113">Inhibition of host RLR pathway by virus</keyword>
<keyword id="KW-0472">Membrane</keyword>
<keyword id="KW-1119">Modulation of host cell apoptosis by virus</keyword>
<keyword id="KW-0899">Viral immunoevasion</keyword>
<evidence type="ECO:0000255" key="1">
    <source>
        <dbReference type="HAMAP-Rule" id="MF_04064"/>
    </source>
</evidence>
<evidence type="ECO:0000256" key="2">
    <source>
        <dbReference type="SAM" id="MobiDB-lite"/>
    </source>
</evidence>
<organismHost>
    <name type="scientific">Aves</name>
    <dbReference type="NCBI Taxonomy" id="8782"/>
</organismHost>
<reference key="1">
    <citation type="journal article" date="2006" name="Science">
        <title>Large-scale sequence analysis of avian influenza isolates.</title>
        <authorList>
            <person name="Obenauer J.C."/>
            <person name="Denson J."/>
            <person name="Mehta P.K."/>
            <person name="Su X."/>
            <person name="Mukatira S."/>
            <person name="Finkelstein D.B."/>
            <person name="Xu X."/>
            <person name="Wang J."/>
            <person name="Ma J."/>
            <person name="Fan Y."/>
            <person name="Rakestraw K.M."/>
            <person name="Webster R.G."/>
            <person name="Hoffmann E."/>
            <person name="Krauss S."/>
            <person name="Zheng J."/>
            <person name="Zhang Z."/>
            <person name="Naeve C.W."/>
        </authorList>
    </citation>
    <scope>NUCLEOTIDE SEQUENCE [GENOMIC RNA]</scope>
</reference>
<gene>
    <name evidence="1" type="primary">PB1</name>
</gene>
<dbReference type="EMBL" id="CY015113">
    <property type="protein sequence ID" value="ABI85153.1"/>
    <property type="molecule type" value="Genomic_RNA"/>
</dbReference>
<dbReference type="SMR" id="Q0A2C9"/>
<dbReference type="Proteomes" id="UP000105783">
    <property type="component" value="Genome"/>
</dbReference>
<dbReference type="GO" id="GO:0044164">
    <property type="term" value="C:host cell cytosol"/>
    <property type="evidence" value="ECO:0007669"/>
    <property type="project" value="UniProtKB-SubCell"/>
</dbReference>
<dbReference type="GO" id="GO:0044192">
    <property type="term" value="C:host cell mitochondrial inner membrane"/>
    <property type="evidence" value="ECO:0007669"/>
    <property type="project" value="UniProtKB-SubCell"/>
</dbReference>
<dbReference type="GO" id="GO:0042025">
    <property type="term" value="C:host cell nucleus"/>
    <property type="evidence" value="ECO:0007669"/>
    <property type="project" value="UniProtKB-SubCell"/>
</dbReference>
<dbReference type="GO" id="GO:0016020">
    <property type="term" value="C:membrane"/>
    <property type="evidence" value="ECO:0007669"/>
    <property type="project" value="UniProtKB-UniRule"/>
</dbReference>
<dbReference type="GO" id="GO:0052150">
    <property type="term" value="P:symbiont-mediated perturbation of host apoptosis"/>
    <property type="evidence" value="ECO:0007669"/>
    <property type="project" value="UniProtKB-KW"/>
</dbReference>
<dbReference type="GO" id="GO:0039545">
    <property type="term" value="P:symbiont-mediated suppression of host cytoplasmic pattern recognition receptor signaling pathway via inhibition of MAVS activity"/>
    <property type="evidence" value="ECO:0007669"/>
    <property type="project" value="UniProtKB-KW"/>
</dbReference>
<dbReference type="HAMAP" id="MF_04064">
    <property type="entry name" value="INFV_PB1F2"/>
    <property type="match status" value="1"/>
</dbReference>
<dbReference type="InterPro" id="IPR021045">
    <property type="entry name" value="Flu_proapoptotic_PB1-F2"/>
</dbReference>
<dbReference type="Pfam" id="PF11986">
    <property type="entry name" value="PB1-F2"/>
    <property type="match status" value="1"/>
</dbReference>
<name>PB1F2_I83A6</name>
<accession>Q0A2C9</accession>